<comment type="function">
    <text evidence="1">Catalyzes the proton-dependent uptake of 2-keto-3-deoxygluconate (KDG) into the cell.</text>
</comment>
<comment type="catalytic activity">
    <reaction evidence="1">
        <text>2-dehydro-3-deoxy-D-gluconate(in) + H(+)(in) = 2-dehydro-3-deoxy-D-gluconate(out) + H(+)(out)</text>
        <dbReference type="Rhea" id="RHEA:29943"/>
        <dbReference type="ChEBI" id="CHEBI:15378"/>
        <dbReference type="ChEBI" id="CHEBI:57990"/>
    </reaction>
    <physiologicalReaction direction="right-to-left" evidence="1">
        <dbReference type="Rhea" id="RHEA:29945"/>
    </physiologicalReaction>
</comment>
<comment type="subcellular location">
    <subcellularLocation>
        <location evidence="1">Cell inner membrane</location>
        <topology evidence="1">Multi-pass membrane protein</topology>
    </subcellularLocation>
</comment>
<comment type="similarity">
    <text evidence="1 2">Belongs to the KdgT transporter family.</text>
</comment>
<feature type="chain" id="PRO_0000209681" description="2-keto-3-deoxygluconate permease 2">
    <location>
        <begin position="1"/>
        <end position="317"/>
    </location>
</feature>
<feature type="transmembrane region" description="Helical" evidence="1">
    <location>
        <begin position="10"/>
        <end position="30"/>
    </location>
</feature>
<feature type="transmembrane region" description="Helical" evidence="1">
    <location>
        <begin position="35"/>
        <end position="55"/>
    </location>
</feature>
<feature type="transmembrane region" description="Helical" evidence="1">
    <location>
        <begin position="74"/>
        <end position="94"/>
    </location>
</feature>
<feature type="transmembrane region" description="Helical" evidence="1">
    <location>
        <begin position="105"/>
        <end position="125"/>
    </location>
</feature>
<feature type="transmembrane region" description="Helical" evidence="1">
    <location>
        <begin position="133"/>
        <end position="153"/>
    </location>
</feature>
<feature type="transmembrane region" description="Helical" evidence="1">
    <location>
        <begin position="158"/>
        <end position="178"/>
    </location>
</feature>
<feature type="transmembrane region" description="Helical" evidence="1">
    <location>
        <begin position="191"/>
        <end position="211"/>
    </location>
</feature>
<feature type="transmembrane region" description="Helical" evidence="1">
    <location>
        <begin position="214"/>
        <end position="234"/>
    </location>
</feature>
<feature type="transmembrane region" description="Helical" evidence="1">
    <location>
        <begin position="249"/>
        <end position="269"/>
    </location>
</feature>
<feature type="transmembrane region" description="Helical" evidence="1">
    <location>
        <begin position="282"/>
        <end position="302"/>
    </location>
</feature>
<keyword id="KW-0997">Cell inner membrane</keyword>
<keyword id="KW-1003">Cell membrane</keyword>
<keyword id="KW-0472">Membrane</keyword>
<keyword id="KW-0762">Sugar transport</keyword>
<keyword id="KW-0769">Symport</keyword>
<keyword id="KW-0812">Transmembrane</keyword>
<keyword id="KW-1133">Transmembrane helix</keyword>
<keyword id="KW-0813">Transport</keyword>
<proteinExistence type="inferred from homology"/>
<evidence type="ECO:0000255" key="1">
    <source>
        <dbReference type="HAMAP-Rule" id="MF_00070"/>
    </source>
</evidence>
<evidence type="ECO:0000305" key="2"/>
<name>KDGT2_SALTI</name>
<sequence length="317" mass="32394">MKIKKTLERFPGGMMVVPLIIGALFKTFAPEALEIGGFVISISHGAMAILGMFLVCMGADIQFKAAPKALKKGAAITFAKFASGVIIGILVGKFCGPDGLLGLSALAIISAMTNSNSGLYAALVGEYGDETDGGAIAVISLNDGPFFTMLALGSAGMVSIPFMNLVAVIIPIIIGMILGNLDEDMRKFLKQGSVVTIPFFAFGLGYSIDFARLITAGSSGILLGLMTVAIGGFFNIFADRVTGGSGVAGAAVSTTSGNAVATPAAIALLDPHFTDLASTAAAQVAASTIITALCAPFLTVWIKKRYDRKLNPAAAGG</sequence>
<accession>Q8Z8H3</accession>
<gene>
    <name evidence="1" type="primary">kdgT2</name>
    <name type="ordered locus">STY0702</name>
    <name type="ordered locus">t2216</name>
</gene>
<protein>
    <recommendedName>
        <fullName evidence="1">2-keto-3-deoxygluconate permease 2</fullName>
        <shortName evidence="1">KDG permease 2</shortName>
    </recommendedName>
</protein>
<dbReference type="EMBL" id="AL513382">
    <property type="protein sequence ID" value="CAD05128.1"/>
    <property type="molecule type" value="Genomic_DNA"/>
</dbReference>
<dbReference type="EMBL" id="AE014613">
    <property type="protein sequence ID" value="AAO69819.1"/>
    <property type="molecule type" value="Genomic_DNA"/>
</dbReference>
<dbReference type="RefSeq" id="NP_455227.1">
    <property type="nucleotide sequence ID" value="NC_003198.1"/>
</dbReference>
<dbReference type="RefSeq" id="WP_000694473.1">
    <property type="nucleotide sequence ID" value="NZ_WSUR01000015.1"/>
</dbReference>
<dbReference type="SMR" id="Q8Z8H3"/>
<dbReference type="STRING" id="220341.gene:17584709"/>
<dbReference type="KEGG" id="stt:t2216"/>
<dbReference type="KEGG" id="sty:STY0702"/>
<dbReference type="PATRIC" id="fig|220341.7.peg.707"/>
<dbReference type="eggNOG" id="ENOG502Z7JT">
    <property type="taxonomic scope" value="Bacteria"/>
</dbReference>
<dbReference type="HOGENOM" id="CLU_057476_0_0_6"/>
<dbReference type="OMA" id="QYGDARD"/>
<dbReference type="OrthoDB" id="3185611at2"/>
<dbReference type="Proteomes" id="UP000000541">
    <property type="component" value="Chromosome"/>
</dbReference>
<dbReference type="Proteomes" id="UP000002670">
    <property type="component" value="Chromosome"/>
</dbReference>
<dbReference type="GO" id="GO:0005886">
    <property type="term" value="C:plasma membrane"/>
    <property type="evidence" value="ECO:0007669"/>
    <property type="project" value="UniProtKB-SubCell"/>
</dbReference>
<dbReference type="GO" id="GO:0015649">
    <property type="term" value="F:2-keto-3-deoxygluconate:proton symporter activity"/>
    <property type="evidence" value="ECO:0007669"/>
    <property type="project" value="UniProtKB-UniRule"/>
</dbReference>
<dbReference type="HAMAP" id="MF_00070">
    <property type="entry name" value="KdgT"/>
    <property type="match status" value="1"/>
</dbReference>
<dbReference type="InterPro" id="IPR004684">
    <property type="entry name" value="2keto-3dGluconate_permease"/>
</dbReference>
<dbReference type="Pfam" id="PF03812">
    <property type="entry name" value="KdgT"/>
    <property type="match status" value="1"/>
</dbReference>
<reference key="1">
    <citation type="journal article" date="2001" name="Nature">
        <title>Complete genome sequence of a multiple drug resistant Salmonella enterica serovar Typhi CT18.</title>
        <authorList>
            <person name="Parkhill J."/>
            <person name="Dougan G."/>
            <person name="James K.D."/>
            <person name="Thomson N.R."/>
            <person name="Pickard D."/>
            <person name="Wain J."/>
            <person name="Churcher C.M."/>
            <person name="Mungall K.L."/>
            <person name="Bentley S.D."/>
            <person name="Holden M.T.G."/>
            <person name="Sebaihia M."/>
            <person name="Baker S."/>
            <person name="Basham D."/>
            <person name="Brooks K."/>
            <person name="Chillingworth T."/>
            <person name="Connerton P."/>
            <person name="Cronin A."/>
            <person name="Davis P."/>
            <person name="Davies R.M."/>
            <person name="Dowd L."/>
            <person name="White N."/>
            <person name="Farrar J."/>
            <person name="Feltwell T."/>
            <person name="Hamlin N."/>
            <person name="Haque A."/>
            <person name="Hien T.T."/>
            <person name="Holroyd S."/>
            <person name="Jagels K."/>
            <person name="Krogh A."/>
            <person name="Larsen T.S."/>
            <person name="Leather S."/>
            <person name="Moule S."/>
            <person name="O'Gaora P."/>
            <person name="Parry C."/>
            <person name="Quail M.A."/>
            <person name="Rutherford K.M."/>
            <person name="Simmonds M."/>
            <person name="Skelton J."/>
            <person name="Stevens K."/>
            <person name="Whitehead S."/>
            <person name="Barrell B.G."/>
        </authorList>
    </citation>
    <scope>NUCLEOTIDE SEQUENCE [LARGE SCALE GENOMIC DNA]</scope>
    <source>
        <strain>CT18</strain>
    </source>
</reference>
<reference key="2">
    <citation type="journal article" date="2003" name="J. Bacteriol.">
        <title>Comparative genomics of Salmonella enterica serovar Typhi strains Ty2 and CT18.</title>
        <authorList>
            <person name="Deng W."/>
            <person name="Liou S.-R."/>
            <person name="Plunkett G. III"/>
            <person name="Mayhew G.F."/>
            <person name="Rose D.J."/>
            <person name="Burland V."/>
            <person name="Kodoyianni V."/>
            <person name="Schwartz D.C."/>
            <person name="Blattner F.R."/>
        </authorList>
    </citation>
    <scope>NUCLEOTIDE SEQUENCE [LARGE SCALE GENOMIC DNA]</scope>
    <source>
        <strain>ATCC 700931 / Ty2</strain>
    </source>
</reference>
<organism>
    <name type="scientific">Salmonella typhi</name>
    <dbReference type="NCBI Taxonomy" id="90370"/>
    <lineage>
        <taxon>Bacteria</taxon>
        <taxon>Pseudomonadati</taxon>
        <taxon>Pseudomonadota</taxon>
        <taxon>Gammaproteobacteria</taxon>
        <taxon>Enterobacterales</taxon>
        <taxon>Enterobacteriaceae</taxon>
        <taxon>Salmonella</taxon>
    </lineage>
</organism>